<dbReference type="EC" id="6.1.1.1" evidence="1"/>
<dbReference type="EMBL" id="AE015924">
    <property type="protein sequence ID" value="AAQ65484.1"/>
    <property type="molecule type" value="Genomic_DNA"/>
</dbReference>
<dbReference type="RefSeq" id="WP_005874055.1">
    <property type="nucleotide sequence ID" value="NC_002950.2"/>
</dbReference>
<dbReference type="SMR" id="Q7MXD8"/>
<dbReference type="STRING" id="242619.PG_0263"/>
<dbReference type="EnsemblBacteria" id="AAQ65484">
    <property type="protein sequence ID" value="AAQ65484"/>
    <property type="gene ID" value="PG_0263"/>
</dbReference>
<dbReference type="KEGG" id="pgi:PG_0263"/>
<dbReference type="eggNOG" id="COG0162">
    <property type="taxonomic scope" value="Bacteria"/>
</dbReference>
<dbReference type="HOGENOM" id="CLU_024003_0_3_10"/>
<dbReference type="Proteomes" id="UP000000588">
    <property type="component" value="Chromosome"/>
</dbReference>
<dbReference type="GO" id="GO:0005829">
    <property type="term" value="C:cytosol"/>
    <property type="evidence" value="ECO:0007669"/>
    <property type="project" value="TreeGrafter"/>
</dbReference>
<dbReference type="GO" id="GO:0005524">
    <property type="term" value="F:ATP binding"/>
    <property type="evidence" value="ECO:0007669"/>
    <property type="project" value="UniProtKB-UniRule"/>
</dbReference>
<dbReference type="GO" id="GO:0003723">
    <property type="term" value="F:RNA binding"/>
    <property type="evidence" value="ECO:0007669"/>
    <property type="project" value="UniProtKB-KW"/>
</dbReference>
<dbReference type="GO" id="GO:0004831">
    <property type="term" value="F:tyrosine-tRNA ligase activity"/>
    <property type="evidence" value="ECO:0007669"/>
    <property type="project" value="UniProtKB-UniRule"/>
</dbReference>
<dbReference type="GO" id="GO:0006437">
    <property type="term" value="P:tyrosyl-tRNA aminoacylation"/>
    <property type="evidence" value="ECO:0007669"/>
    <property type="project" value="UniProtKB-UniRule"/>
</dbReference>
<dbReference type="CDD" id="cd00805">
    <property type="entry name" value="TyrRS_core"/>
    <property type="match status" value="1"/>
</dbReference>
<dbReference type="FunFam" id="1.10.240.10:FF:000001">
    <property type="entry name" value="Tyrosine--tRNA ligase"/>
    <property type="match status" value="1"/>
</dbReference>
<dbReference type="FunFam" id="3.10.290.10:FF:000014">
    <property type="entry name" value="Tyrosine--tRNA ligase"/>
    <property type="match status" value="1"/>
</dbReference>
<dbReference type="FunFam" id="3.40.50.620:FF:000008">
    <property type="entry name" value="Tyrosine--tRNA ligase"/>
    <property type="match status" value="1"/>
</dbReference>
<dbReference type="Gene3D" id="3.40.50.620">
    <property type="entry name" value="HUPs"/>
    <property type="match status" value="1"/>
</dbReference>
<dbReference type="Gene3D" id="3.10.290.10">
    <property type="entry name" value="RNA-binding S4 domain"/>
    <property type="match status" value="1"/>
</dbReference>
<dbReference type="Gene3D" id="1.10.240.10">
    <property type="entry name" value="Tyrosyl-Transfer RNA Synthetase"/>
    <property type="match status" value="1"/>
</dbReference>
<dbReference type="HAMAP" id="MF_02006">
    <property type="entry name" value="Tyr_tRNA_synth_type1"/>
    <property type="match status" value="1"/>
</dbReference>
<dbReference type="InterPro" id="IPR001412">
    <property type="entry name" value="aa-tRNA-synth_I_CS"/>
</dbReference>
<dbReference type="InterPro" id="IPR002305">
    <property type="entry name" value="aa-tRNA-synth_Ic"/>
</dbReference>
<dbReference type="InterPro" id="IPR014729">
    <property type="entry name" value="Rossmann-like_a/b/a_fold"/>
</dbReference>
<dbReference type="InterPro" id="IPR036986">
    <property type="entry name" value="S4_RNA-bd_sf"/>
</dbReference>
<dbReference type="InterPro" id="IPR054608">
    <property type="entry name" value="SYY-like_C"/>
</dbReference>
<dbReference type="InterPro" id="IPR002307">
    <property type="entry name" value="Tyr-tRNA-ligase"/>
</dbReference>
<dbReference type="InterPro" id="IPR024088">
    <property type="entry name" value="Tyr-tRNA-ligase_bac-type"/>
</dbReference>
<dbReference type="InterPro" id="IPR024107">
    <property type="entry name" value="Tyr-tRNA-ligase_bac_1"/>
</dbReference>
<dbReference type="NCBIfam" id="TIGR00234">
    <property type="entry name" value="tyrS"/>
    <property type="match status" value="1"/>
</dbReference>
<dbReference type="PANTHER" id="PTHR11766:SF0">
    <property type="entry name" value="TYROSINE--TRNA LIGASE, MITOCHONDRIAL"/>
    <property type="match status" value="1"/>
</dbReference>
<dbReference type="PANTHER" id="PTHR11766">
    <property type="entry name" value="TYROSYL-TRNA SYNTHETASE"/>
    <property type="match status" value="1"/>
</dbReference>
<dbReference type="Pfam" id="PF22421">
    <property type="entry name" value="SYY_C-terminal"/>
    <property type="match status" value="1"/>
</dbReference>
<dbReference type="Pfam" id="PF00579">
    <property type="entry name" value="tRNA-synt_1b"/>
    <property type="match status" value="1"/>
</dbReference>
<dbReference type="PRINTS" id="PR01040">
    <property type="entry name" value="TRNASYNTHTYR"/>
</dbReference>
<dbReference type="SUPFAM" id="SSF55174">
    <property type="entry name" value="Alpha-L RNA-binding motif"/>
    <property type="match status" value="1"/>
</dbReference>
<dbReference type="SUPFAM" id="SSF52374">
    <property type="entry name" value="Nucleotidylyl transferase"/>
    <property type="match status" value="1"/>
</dbReference>
<dbReference type="PROSITE" id="PS00178">
    <property type="entry name" value="AA_TRNA_LIGASE_I"/>
    <property type="match status" value="1"/>
</dbReference>
<dbReference type="PROSITE" id="PS50889">
    <property type="entry name" value="S4"/>
    <property type="match status" value="1"/>
</dbReference>
<protein>
    <recommendedName>
        <fullName evidence="1">Tyrosine--tRNA ligase</fullName>
        <ecNumber evidence="1">6.1.1.1</ecNumber>
    </recommendedName>
    <alternativeName>
        <fullName evidence="1">Tyrosyl-tRNA synthetase</fullName>
        <shortName evidence="1">TyrRS</shortName>
    </alternativeName>
</protein>
<reference key="1">
    <citation type="journal article" date="2003" name="J. Bacteriol.">
        <title>Complete genome sequence of the oral pathogenic bacterium Porphyromonas gingivalis strain W83.</title>
        <authorList>
            <person name="Nelson K.E."/>
            <person name="Fleischmann R.D."/>
            <person name="DeBoy R.T."/>
            <person name="Paulsen I.T."/>
            <person name="Fouts D.E."/>
            <person name="Eisen J.A."/>
            <person name="Daugherty S.C."/>
            <person name="Dodson R.J."/>
            <person name="Durkin A.S."/>
            <person name="Gwinn M.L."/>
            <person name="Haft D.H."/>
            <person name="Kolonay J.F."/>
            <person name="Nelson W.C."/>
            <person name="Mason T.M."/>
            <person name="Tallon L."/>
            <person name="Gray J."/>
            <person name="Granger D."/>
            <person name="Tettelin H."/>
            <person name="Dong H."/>
            <person name="Galvin J.L."/>
            <person name="Duncan M.J."/>
            <person name="Dewhirst F.E."/>
            <person name="Fraser C.M."/>
        </authorList>
    </citation>
    <scope>NUCLEOTIDE SEQUENCE [LARGE SCALE GENOMIC DNA]</scope>
    <source>
        <strain>ATCC BAA-308 / W83</strain>
    </source>
</reference>
<comment type="function">
    <text evidence="1">Catalyzes the attachment of tyrosine to tRNA(Tyr) in a two-step reaction: tyrosine is first activated by ATP to form Tyr-AMP and then transferred to the acceptor end of tRNA(Tyr).</text>
</comment>
<comment type="catalytic activity">
    <reaction evidence="1">
        <text>tRNA(Tyr) + L-tyrosine + ATP = L-tyrosyl-tRNA(Tyr) + AMP + diphosphate + H(+)</text>
        <dbReference type="Rhea" id="RHEA:10220"/>
        <dbReference type="Rhea" id="RHEA-COMP:9706"/>
        <dbReference type="Rhea" id="RHEA-COMP:9707"/>
        <dbReference type="ChEBI" id="CHEBI:15378"/>
        <dbReference type="ChEBI" id="CHEBI:30616"/>
        <dbReference type="ChEBI" id="CHEBI:33019"/>
        <dbReference type="ChEBI" id="CHEBI:58315"/>
        <dbReference type="ChEBI" id="CHEBI:78442"/>
        <dbReference type="ChEBI" id="CHEBI:78536"/>
        <dbReference type="ChEBI" id="CHEBI:456215"/>
        <dbReference type="EC" id="6.1.1.1"/>
    </reaction>
</comment>
<comment type="subunit">
    <text evidence="1">Homodimer.</text>
</comment>
<comment type="subcellular location">
    <subcellularLocation>
        <location evidence="1">Cytoplasm</location>
    </subcellularLocation>
</comment>
<comment type="similarity">
    <text evidence="1">Belongs to the class-I aminoacyl-tRNA synthetase family. TyrS type 1 subfamily.</text>
</comment>
<organism>
    <name type="scientific">Porphyromonas gingivalis (strain ATCC BAA-308 / W83)</name>
    <dbReference type="NCBI Taxonomy" id="242619"/>
    <lineage>
        <taxon>Bacteria</taxon>
        <taxon>Pseudomonadati</taxon>
        <taxon>Bacteroidota</taxon>
        <taxon>Bacteroidia</taxon>
        <taxon>Bacteroidales</taxon>
        <taxon>Porphyromonadaceae</taxon>
        <taxon>Porphyromonas</taxon>
    </lineage>
</organism>
<proteinExistence type="inferred from homology"/>
<gene>
    <name evidence="1" type="primary">tyrS</name>
    <name type="ordered locus">PG_0263</name>
</gene>
<feature type="chain" id="PRO_0000234750" description="Tyrosine--tRNA ligase">
    <location>
        <begin position="1"/>
        <end position="430"/>
    </location>
</feature>
<feature type="domain" description="S4 RNA-binding" evidence="1">
    <location>
        <begin position="362"/>
        <end position="430"/>
    </location>
</feature>
<feature type="short sequence motif" description="'HIGH' region">
    <location>
        <begin position="37"/>
        <end position="46"/>
    </location>
</feature>
<feature type="short sequence motif" description="'KMSKS' region">
    <location>
        <begin position="232"/>
        <end position="236"/>
    </location>
</feature>
<feature type="binding site" evidence="1">
    <location>
        <position position="32"/>
    </location>
    <ligand>
        <name>L-tyrosine</name>
        <dbReference type="ChEBI" id="CHEBI:58315"/>
    </ligand>
</feature>
<feature type="binding site" evidence="1">
    <location>
        <position position="172"/>
    </location>
    <ligand>
        <name>L-tyrosine</name>
        <dbReference type="ChEBI" id="CHEBI:58315"/>
    </ligand>
</feature>
<feature type="binding site" evidence="1">
    <location>
        <position position="176"/>
    </location>
    <ligand>
        <name>L-tyrosine</name>
        <dbReference type="ChEBI" id="CHEBI:58315"/>
    </ligand>
</feature>
<feature type="binding site" evidence="1">
    <location>
        <position position="235"/>
    </location>
    <ligand>
        <name>ATP</name>
        <dbReference type="ChEBI" id="CHEBI:30616"/>
    </ligand>
</feature>
<accession>Q7MXD8</accession>
<keyword id="KW-0030">Aminoacyl-tRNA synthetase</keyword>
<keyword id="KW-0067">ATP-binding</keyword>
<keyword id="KW-0963">Cytoplasm</keyword>
<keyword id="KW-0436">Ligase</keyword>
<keyword id="KW-0547">Nucleotide-binding</keyword>
<keyword id="KW-0648">Protein biosynthesis</keyword>
<keyword id="KW-1185">Reference proteome</keyword>
<keyword id="KW-0694">RNA-binding</keyword>
<sequence>MNFVEELRWRGMIHDIMPGTEEHLNKGMTSAYVGIDPTADSLHIGHLVGVMMLRHFQRAGHRPIALIGGATGMIGDPSMKSAERVLLDEATLRHNQDCIKQQLAKFLDFDSDAPNAAKLVNNYDWMKDYSFLGFIRDIGKHITVNYMMAKDSVKKRLSAESSTGLSFTEFSYQLLQGYDYLYLYRNEGCRLQMGGSDQWGNITTGTELIRRKDGGEAFALTCPLITKADGGKFGKTESGNIWLDPARTSPYAFYQFWLNVSDADAEKYIKIFTGLNQDEIAELASRQAEAPHLRPLQKRLAEEITVMVHSREAYDAAVEASEILFGKSTTEQLRKLDEATLLDVFAGVPQYHVERSRIATGISLVDLLADATDIFPSKGELRKTVKAGGVSLNKEKVADAEQTVGEDDLLSDRYLLAQKGKKSYYLIIVE</sequence>
<name>SYY_PORGI</name>
<evidence type="ECO:0000255" key="1">
    <source>
        <dbReference type="HAMAP-Rule" id="MF_02006"/>
    </source>
</evidence>